<accession>A3PIX9</accession>
<organism>
    <name type="scientific">Cereibacter sphaeroides (strain ATCC 17029 / ATH 2.4.9)</name>
    <name type="common">Rhodobacter sphaeroides</name>
    <dbReference type="NCBI Taxonomy" id="349101"/>
    <lineage>
        <taxon>Bacteria</taxon>
        <taxon>Pseudomonadati</taxon>
        <taxon>Pseudomonadota</taxon>
        <taxon>Alphaproteobacteria</taxon>
        <taxon>Rhodobacterales</taxon>
        <taxon>Paracoccaceae</taxon>
        <taxon>Cereibacter</taxon>
    </lineage>
</organism>
<proteinExistence type="inferred from homology"/>
<comment type="function">
    <text evidence="1">NDH-1 shuttles electrons from NADH, via FMN and iron-sulfur (Fe-S) centers, to quinones in the respiratory chain. The immediate electron acceptor for the enzyme in this species is believed to be ubiquinone. Couples the redox reaction to proton translocation (for every two electrons transferred, four hydrogen ions are translocated across the cytoplasmic membrane), and thus conserves the redox energy in a proton gradient.</text>
</comment>
<comment type="catalytic activity">
    <reaction evidence="1">
        <text>a quinone + NADH + 5 H(+)(in) = a quinol + NAD(+) + 4 H(+)(out)</text>
        <dbReference type="Rhea" id="RHEA:57888"/>
        <dbReference type="ChEBI" id="CHEBI:15378"/>
        <dbReference type="ChEBI" id="CHEBI:24646"/>
        <dbReference type="ChEBI" id="CHEBI:57540"/>
        <dbReference type="ChEBI" id="CHEBI:57945"/>
        <dbReference type="ChEBI" id="CHEBI:132124"/>
    </reaction>
</comment>
<comment type="cofactor">
    <cofactor evidence="1">
        <name>[4Fe-4S] cluster</name>
        <dbReference type="ChEBI" id="CHEBI:49883"/>
    </cofactor>
    <text evidence="1">Binds 2 [4Fe-4S] clusters per subunit.</text>
</comment>
<comment type="subunit">
    <text evidence="1">NDH-1 is composed of 14 different subunits. Subunits NuoA, H, J, K, L, M, N constitute the membrane sector of the complex.</text>
</comment>
<comment type="subcellular location">
    <subcellularLocation>
        <location evidence="1">Cell inner membrane</location>
        <topology evidence="1">Peripheral membrane protein</topology>
    </subcellularLocation>
</comment>
<comment type="similarity">
    <text evidence="1">Belongs to the complex I 23 kDa subunit family.</text>
</comment>
<gene>
    <name evidence="1" type="primary">nuoI1</name>
    <name type="ordered locus">Rsph17029_1185</name>
</gene>
<protein>
    <recommendedName>
        <fullName evidence="1">NADH-quinone oxidoreductase subunit I 1</fullName>
        <ecNumber evidence="1">7.1.1.-</ecNumber>
    </recommendedName>
    <alternativeName>
        <fullName evidence="1">NADH dehydrogenase I subunit I 1</fullName>
    </alternativeName>
    <alternativeName>
        <fullName evidence="1">NDH-1 subunit I 1</fullName>
    </alternativeName>
</protein>
<name>NUOI1_CERS1</name>
<dbReference type="EC" id="7.1.1.-" evidence="1"/>
<dbReference type="EMBL" id="CP000577">
    <property type="protein sequence ID" value="ABN76295.1"/>
    <property type="molecule type" value="Genomic_DNA"/>
</dbReference>
<dbReference type="SMR" id="A3PIX9"/>
<dbReference type="KEGG" id="rsh:Rsph17029_1185"/>
<dbReference type="HOGENOM" id="CLU_067218_5_1_5"/>
<dbReference type="GO" id="GO:0005886">
    <property type="term" value="C:plasma membrane"/>
    <property type="evidence" value="ECO:0007669"/>
    <property type="project" value="UniProtKB-SubCell"/>
</dbReference>
<dbReference type="GO" id="GO:0051539">
    <property type="term" value="F:4 iron, 4 sulfur cluster binding"/>
    <property type="evidence" value="ECO:0007669"/>
    <property type="project" value="UniProtKB-KW"/>
</dbReference>
<dbReference type="GO" id="GO:0005506">
    <property type="term" value="F:iron ion binding"/>
    <property type="evidence" value="ECO:0007669"/>
    <property type="project" value="UniProtKB-UniRule"/>
</dbReference>
<dbReference type="GO" id="GO:0050136">
    <property type="term" value="F:NADH:ubiquinone reductase (non-electrogenic) activity"/>
    <property type="evidence" value="ECO:0007669"/>
    <property type="project" value="UniProtKB-UniRule"/>
</dbReference>
<dbReference type="GO" id="GO:0048038">
    <property type="term" value="F:quinone binding"/>
    <property type="evidence" value="ECO:0007669"/>
    <property type="project" value="UniProtKB-KW"/>
</dbReference>
<dbReference type="GO" id="GO:0009060">
    <property type="term" value="P:aerobic respiration"/>
    <property type="evidence" value="ECO:0007669"/>
    <property type="project" value="TreeGrafter"/>
</dbReference>
<dbReference type="FunFam" id="3.30.70.3270:FF:000001">
    <property type="entry name" value="NADH-quinone oxidoreductase subunit I 1"/>
    <property type="match status" value="1"/>
</dbReference>
<dbReference type="Gene3D" id="3.30.70.3270">
    <property type="match status" value="1"/>
</dbReference>
<dbReference type="HAMAP" id="MF_01351">
    <property type="entry name" value="NDH1_NuoI"/>
    <property type="match status" value="1"/>
</dbReference>
<dbReference type="InterPro" id="IPR017896">
    <property type="entry name" value="4Fe4S_Fe-S-bd"/>
</dbReference>
<dbReference type="InterPro" id="IPR017900">
    <property type="entry name" value="4Fe4S_Fe_S_CS"/>
</dbReference>
<dbReference type="InterPro" id="IPR010226">
    <property type="entry name" value="NADH_quinone_OxRdtase_chainI"/>
</dbReference>
<dbReference type="NCBIfam" id="TIGR01971">
    <property type="entry name" value="NuoI"/>
    <property type="match status" value="1"/>
</dbReference>
<dbReference type="NCBIfam" id="NF004538">
    <property type="entry name" value="PRK05888.1-4"/>
    <property type="match status" value="1"/>
</dbReference>
<dbReference type="NCBIfam" id="NF004539">
    <property type="entry name" value="PRK05888.1-5"/>
    <property type="match status" value="1"/>
</dbReference>
<dbReference type="PANTHER" id="PTHR10849:SF20">
    <property type="entry name" value="NADH DEHYDROGENASE [UBIQUINONE] IRON-SULFUR PROTEIN 8, MITOCHONDRIAL"/>
    <property type="match status" value="1"/>
</dbReference>
<dbReference type="PANTHER" id="PTHR10849">
    <property type="entry name" value="NADH DEHYDROGENASE UBIQUINONE IRON-SULFUR PROTEIN 8, MITOCHONDRIAL"/>
    <property type="match status" value="1"/>
</dbReference>
<dbReference type="Pfam" id="PF12838">
    <property type="entry name" value="Fer4_7"/>
    <property type="match status" value="1"/>
</dbReference>
<dbReference type="SUPFAM" id="SSF54862">
    <property type="entry name" value="4Fe-4S ferredoxins"/>
    <property type="match status" value="1"/>
</dbReference>
<dbReference type="PROSITE" id="PS00198">
    <property type="entry name" value="4FE4S_FER_1"/>
    <property type="match status" value="2"/>
</dbReference>
<dbReference type="PROSITE" id="PS51379">
    <property type="entry name" value="4FE4S_FER_2"/>
    <property type="match status" value="2"/>
</dbReference>
<feature type="chain" id="PRO_0000298540" description="NADH-quinone oxidoreductase subunit I 1">
    <location>
        <begin position="1"/>
        <end position="167"/>
    </location>
</feature>
<feature type="domain" description="4Fe-4S ferredoxin-type 1" evidence="1">
    <location>
        <begin position="58"/>
        <end position="88"/>
    </location>
</feature>
<feature type="domain" description="4Fe-4S ferredoxin-type 2" evidence="1">
    <location>
        <begin position="98"/>
        <end position="127"/>
    </location>
</feature>
<feature type="binding site" evidence="1">
    <location>
        <position position="68"/>
    </location>
    <ligand>
        <name>[4Fe-4S] cluster</name>
        <dbReference type="ChEBI" id="CHEBI:49883"/>
        <label>1</label>
    </ligand>
</feature>
<feature type="binding site" evidence="1">
    <location>
        <position position="71"/>
    </location>
    <ligand>
        <name>[4Fe-4S] cluster</name>
        <dbReference type="ChEBI" id="CHEBI:49883"/>
        <label>1</label>
    </ligand>
</feature>
<feature type="binding site" evidence="1">
    <location>
        <position position="74"/>
    </location>
    <ligand>
        <name>[4Fe-4S] cluster</name>
        <dbReference type="ChEBI" id="CHEBI:49883"/>
        <label>1</label>
    </ligand>
</feature>
<feature type="binding site" evidence="1">
    <location>
        <position position="78"/>
    </location>
    <ligand>
        <name>[4Fe-4S] cluster</name>
        <dbReference type="ChEBI" id="CHEBI:49883"/>
        <label>2</label>
    </ligand>
</feature>
<feature type="binding site" evidence="1">
    <location>
        <position position="107"/>
    </location>
    <ligand>
        <name>[4Fe-4S] cluster</name>
        <dbReference type="ChEBI" id="CHEBI:49883"/>
        <label>2</label>
    </ligand>
</feature>
<feature type="binding site" evidence="1">
    <location>
        <position position="110"/>
    </location>
    <ligand>
        <name>[4Fe-4S] cluster</name>
        <dbReference type="ChEBI" id="CHEBI:49883"/>
        <label>2</label>
    </ligand>
</feature>
<feature type="binding site" evidence="1">
    <location>
        <position position="113"/>
    </location>
    <ligand>
        <name>[4Fe-4S] cluster</name>
        <dbReference type="ChEBI" id="CHEBI:49883"/>
        <label>2</label>
    </ligand>
</feature>
<feature type="binding site" evidence="1">
    <location>
        <position position="117"/>
    </location>
    <ligand>
        <name>[4Fe-4S] cluster</name>
        <dbReference type="ChEBI" id="CHEBI:49883"/>
        <label>1</label>
    </ligand>
</feature>
<evidence type="ECO:0000255" key="1">
    <source>
        <dbReference type="HAMAP-Rule" id="MF_01351"/>
    </source>
</evidence>
<keyword id="KW-0004">4Fe-4S</keyword>
<keyword id="KW-0997">Cell inner membrane</keyword>
<keyword id="KW-1003">Cell membrane</keyword>
<keyword id="KW-0408">Iron</keyword>
<keyword id="KW-0411">Iron-sulfur</keyword>
<keyword id="KW-0472">Membrane</keyword>
<keyword id="KW-0479">Metal-binding</keyword>
<keyword id="KW-0520">NAD</keyword>
<keyword id="KW-0874">Quinone</keyword>
<keyword id="KW-0677">Repeat</keyword>
<keyword id="KW-1278">Translocase</keyword>
<keyword id="KW-0830">Ubiquinone</keyword>
<reference key="1">
    <citation type="submission" date="2007-02" db="EMBL/GenBank/DDBJ databases">
        <title>Complete sequence of chromosome 1 of Rhodobacter sphaeroides ATCC 17029.</title>
        <authorList>
            <person name="Copeland A."/>
            <person name="Lucas S."/>
            <person name="Lapidus A."/>
            <person name="Barry K."/>
            <person name="Detter J.C."/>
            <person name="Glavina del Rio T."/>
            <person name="Hammon N."/>
            <person name="Israni S."/>
            <person name="Dalin E."/>
            <person name="Tice H."/>
            <person name="Pitluck S."/>
            <person name="Kiss H."/>
            <person name="Brettin T."/>
            <person name="Bruce D."/>
            <person name="Han C."/>
            <person name="Tapia R."/>
            <person name="Gilna P."/>
            <person name="Schmutz J."/>
            <person name="Larimer F."/>
            <person name="Land M."/>
            <person name="Hauser L."/>
            <person name="Kyrpides N."/>
            <person name="Mikhailova N."/>
            <person name="Richardson P."/>
            <person name="Mackenzie C."/>
            <person name="Choudhary M."/>
            <person name="Donohue T.J."/>
            <person name="Kaplan S."/>
        </authorList>
    </citation>
    <scope>NUCLEOTIDE SEQUENCE [LARGE SCALE GENOMIC DNA]</scope>
    <source>
        <strain>ATCC 17029 / ATH 2.4.9</strain>
    </source>
</reference>
<sequence>MARTSAIDYGRAAKYFLLLDFIKGFGLGMKYFFAPKHTVNYPHEKGPLSPRFRGEHALRRYPNGEERCIACKLCEAVCPAQAITIDAEPREDGSRRTTRYDIDMTKCIYCGFCQEACPVDAIVEGPNFEFSTETREELFYNKDRLLENGARWEAEIARNLELDAPYR</sequence>